<gene>
    <name evidence="1" type="primary">leuB</name>
    <name type="ordered locus">Nwi_2795</name>
</gene>
<dbReference type="EC" id="1.1.1.85" evidence="1"/>
<dbReference type="EMBL" id="CP000115">
    <property type="protein sequence ID" value="ABA06048.1"/>
    <property type="molecule type" value="Genomic_DNA"/>
</dbReference>
<dbReference type="RefSeq" id="WP_011315993.1">
    <property type="nucleotide sequence ID" value="NC_007406.1"/>
</dbReference>
<dbReference type="SMR" id="Q3SNU3"/>
<dbReference type="STRING" id="323098.Nwi_2795"/>
<dbReference type="KEGG" id="nwi:Nwi_2795"/>
<dbReference type="eggNOG" id="COG0473">
    <property type="taxonomic scope" value="Bacteria"/>
</dbReference>
<dbReference type="HOGENOM" id="CLU_031953_0_3_5"/>
<dbReference type="OrthoDB" id="9767905at2"/>
<dbReference type="UniPathway" id="UPA00048">
    <property type="reaction ID" value="UER00072"/>
</dbReference>
<dbReference type="Proteomes" id="UP000002531">
    <property type="component" value="Chromosome"/>
</dbReference>
<dbReference type="GO" id="GO:0005829">
    <property type="term" value="C:cytosol"/>
    <property type="evidence" value="ECO:0007669"/>
    <property type="project" value="TreeGrafter"/>
</dbReference>
<dbReference type="GO" id="GO:0003862">
    <property type="term" value="F:3-isopropylmalate dehydrogenase activity"/>
    <property type="evidence" value="ECO:0007669"/>
    <property type="project" value="UniProtKB-UniRule"/>
</dbReference>
<dbReference type="GO" id="GO:0000287">
    <property type="term" value="F:magnesium ion binding"/>
    <property type="evidence" value="ECO:0007669"/>
    <property type="project" value="InterPro"/>
</dbReference>
<dbReference type="GO" id="GO:0051287">
    <property type="term" value="F:NAD binding"/>
    <property type="evidence" value="ECO:0007669"/>
    <property type="project" value="InterPro"/>
</dbReference>
<dbReference type="GO" id="GO:0009098">
    <property type="term" value="P:L-leucine biosynthetic process"/>
    <property type="evidence" value="ECO:0007669"/>
    <property type="project" value="UniProtKB-UniRule"/>
</dbReference>
<dbReference type="FunFam" id="3.40.718.10:FF:000006">
    <property type="entry name" value="3-isopropylmalate dehydrogenase"/>
    <property type="match status" value="1"/>
</dbReference>
<dbReference type="Gene3D" id="3.40.718.10">
    <property type="entry name" value="Isopropylmalate Dehydrogenase"/>
    <property type="match status" value="1"/>
</dbReference>
<dbReference type="HAMAP" id="MF_01033">
    <property type="entry name" value="LeuB_type1"/>
    <property type="match status" value="1"/>
</dbReference>
<dbReference type="InterPro" id="IPR019818">
    <property type="entry name" value="IsoCit/isopropylmalate_DH_CS"/>
</dbReference>
<dbReference type="InterPro" id="IPR024084">
    <property type="entry name" value="IsoPropMal-DH-like_dom"/>
</dbReference>
<dbReference type="InterPro" id="IPR004429">
    <property type="entry name" value="Isopropylmalate_DH"/>
</dbReference>
<dbReference type="NCBIfam" id="TIGR00169">
    <property type="entry name" value="leuB"/>
    <property type="match status" value="1"/>
</dbReference>
<dbReference type="PANTHER" id="PTHR42979">
    <property type="entry name" value="3-ISOPROPYLMALATE DEHYDROGENASE"/>
    <property type="match status" value="1"/>
</dbReference>
<dbReference type="PANTHER" id="PTHR42979:SF1">
    <property type="entry name" value="3-ISOPROPYLMALATE DEHYDROGENASE"/>
    <property type="match status" value="1"/>
</dbReference>
<dbReference type="Pfam" id="PF00180">
    <property type="entry name" value="Iso_dh"/>
    <property type="match status" value="1"/>
</dbReference>
<dbReference type="SMART" id="SM01329">
    <property type="entry name" value="Iso_dh"/>
    <property type="match status" value="1"/>
</dbReference>
<dbReference type="SUPFAM" id="SSF53659">
    <property type="entry name" value="Isocitrate/Isopropylmalate dehydrogenase-like"/>
    <property type="match status" value="1"/>
</dbReference>
<dbReference type="PROSITE" id="PS00470">
    <property type="entry name" value="IDH_IMDH"/>
    <property type="match status" value="1"/>
</dbReference>
<proteinExistence type="inferred from homology"/>
<accession>Q3SNU3</accession>
<protein>
    <recommendedName>
        <fullName evidence="1">3-isopropylmalate dehydrogenase</fullName>
        <ecNumber evidence="1">1.1.1.85</ecNumber>
    </recommendedName>
    <alternativeName>
        <fullName evidence="1">3-IPM-DH</fullName>
    </alternativeName>
    <alternativeName>
        <fullName evidence="1">Beta-IPM dehydrogenase</fullName>
        <shortName evidence="1">IMDH</shortName>
    </alternativeName>
</protein>
<sequence length="370" mass="39965">MATYKLLLLPGDGIGPEVMAEVKRLVGWLDAQGIAKFETEEGLVGGASYDADKVSITDATMAKALAADAVLFGAVGGPKWDSVPYEVRPEAGLLRLRKDLALYANLRPAICYPALAESSSLKPEVVEGLDIMIVRELTGGVYFGEPKTVTDLGNGQKRAVDTQVYDTYEIERIARVAFDLARKRRNKLTSMEKRNVMKTGVLWHEVVTQVHQREYKDVALQHQLADSGGMQLVRWPKQFDVIVTDNLFGDMLSDIAAMLTGSLGMLPSASLGDTDPKTEKRRALYEPVHGSAPDIAGQGLANPIAMLASFGMALRYSFDRGDLADKLDAAIAAVLAKGLRTADLKSEGATVVSTSQMGEAIVKELEALHA</sequence>
<feature type="chain" id="PRO_0000083713" description="3-isopropylmalate dehydrogenase">
    <location>
        <begin position="1"/>
        <end position="370"/>
    </location>
</feature>
<feature type="binding site" evidence="1">
    <location>
        <begin position="77"/>
        <end position="90"/>
    </location>
    <ligand>
        <name>NAD(+)</name>
        <dbReference type="ChEBI" id="CHEBI:57540"/>
    </ligand>
</feature>
<feature type="binding site" evidence="1">
    <location>
        <position position="97"/>
    </location>
    <ligand>
        <name>substrate</name>
    </ligand>
</feature>
<feature type="binding site" evidence="1">
    <location>
        <position position="107"/>
    </location>
    <ligand>
        <name>substrate</name>
    </ligand>
</feature>
<feature type="binding site" evidence="1">
    <location>
        <position position="135"/>
    </location>
    <ligand>
        <name>substrate</name>
    </ligand>
</feature>
<feature type="binding site" evidence="1">
    <location>
        <position position="226"/>
    </location>
    <ligand>
        <name>Mg(2+)</name>
        <dbReference type="ChEBI" id="CHEBI:18420"/>
    </ligand>
</feature>
<feature type="binding site" evidence="1">
    <location>
        <position position="226"/>
    </location>
    <ligand>
        <name>substrate</name>
    </ligand>
</feature>
<feature type="binding site" evidence="1">
    <location>
        <position position="250"/>
    </location>
    <ligand>
        <name>Mg(2+)</name>
        <dbReference type="ChEBI" id="CHEBI:18420"/>
    </ligand>
</feature>
<feature type="binding site" evidence="1">
    <location>
        <position position="254"/>
    </location>
    <ligand>
        <name>Mg(2+)</name>
        <dbReference type="ChEBI" id="CHEBI:18420"/>
    </ligand>
</feature>
<feature type="binding site" evidence="1">
    <location>
        <begin position="290"/>
        <end position="302"/>
    </location>
    <ligand>
        <name>NAD(+)</name>
        <dbReference type="ChEBI" id="CHEBI:57540"/>
    </ligand>
</feature>
<feature type="site" description="Important for catalysis" evidence="1">
    <location>
        <position position="142"/>
    </location>
</feature>
<feature type="site" description="Important for catalysis" evidence="1">
    <location>
        <position position="193"/>
    </location>
</feature>
<name>LEU3_NITWN</name>
<comment type="function">
    <text evidence="1">Catalyzes the oxidation of 3-carboxy-2-hydroxy-4-methylpentanoate (3-isopropylmalate) to 3-carboxy-4-methyl-2-oxopentanoate. The product decarboxylates to 4-methyl-2 oxopentanoate.</text>
</comment>
<comment type="catalytic activity">
    <reaction evidence="1">
        <text>(2R,3S)-3-isopropylmalate + NAD(+) = 4-methyl-2-oxopentanoate + CO2 + NADH</text>
        <dbReference type="Rhea" id="RHEA:32271"/>
        <dbReference type="ChEBI" id="CHEBI:16526"/>
        <dbReference type="ChEBI" id="CHEBI:17865"/>
        <dbReference type="ChEBI" id="CHEBI:35121"/>
        <dbReference type="ChEBI" id="CHEBI:57540"/>
        <dbReference type="ChEBI" id="CHEBI:57945"/>
        <dbReference type="EC" id="1.1.1.85"/>
    </reaction>
</comment>
<comment type="cofactor">
    <cofactor evidence="1">
        <name>Mg(2+)</name>
        <dbReference type="ChEBI" id="CHEBI:18420"/>
    </cofactor>
    <cofactor evidence="1">
        <name>Mn(2+)</name>
        <dbReference type="ChEBI" id="CHEBI:29035"/>
    </cofactor>
    <text evidence="1">Binds 1 Mg(2+) or Mn(2+) ion per subunit.</text>
</comment>
<comment type="pathway">
    <text evidence="1">Amino-acid biosynthesis; L-leucine biosynthesis; L-leucine from 3-methyl-2-oxobutanoate: step 3/4.</text>
</comment>
<comment type="subunit">
    <text evidence="1">Homodimer.</text>
</comment>
<comment type="subcellular location">
    <subcellularLocation>
        <location evidence="1">Cytoplasm</location>
    </subcellularLocation>
</comment>
<comment type="similarity">
    <text evidence="1">Belongs to the isocitrate and isopropylmalate dehydrogenases family. LeuB type 1 subfamily.</text>
</comment>
<keyword id="KW-0028">Amino-acid biosynthesis</keyword>
<keyword id="KW-0100">Branched-chain amino acid biosynthesis</keyword>
<keyword id="KW-0963">Cytoplasm</keyword>
<keyword id="KW-0432">Leucine biosynthesis</keyword>
<keyword id="KW-0460">Magnesium</keyword>
<keyword id="KW-0464">Manganese</keyword>
<keyword id="KW-0479">Metal-binding</keyword>
<keyword id="KW-0520">NAD</keyword>
<keyword id="KW-0560">Oxidoreductase</keyword>
<keyword id="KW-1185">Reference proteome</keyword>
<evidence type="ECO:0000255" key="1">
    <source>
        <dbReference type="HAMAP-Rule" id="MF_01033"/>
    </source>
</evidence>
<organism>
    <name type="scientific">Nitrobacter winogradskyi (strain ATCC 25391 / DSM 10237 / CIP 104748 / NCIMB 11846 / Nb-255)</name>
    <dbReference type="NCBI Taxonomy" id="323098"/>
    <lineage>
        <taxon>Bacteria</taxon>
        <taxon>Pseudomonadati</taxon>
        <taxon>Pseudomonadota</taxon>
        <taxon>Alphaproteobacteria</taxon>
        <taxon>Hyphomicrobiales</taxon>
        <taxon>Nitrobacteraceae</taxon>
        <taxon>Nitrobacter</taxon>
    </lineage>
</organism>
<reference key="1">
    <citation type="journal article" date="2006" name="Appl. Environ. Microbiol.">
        <title>Genome sequence of the chemolithoautotrophic nitrite-oxidizing bacterium Nitrobacter winogradskyi Nb-255.</title>
        <authorList>
            <person name="Starkenburg S.R."/>
            <person name="Chain P.S.G."/>
            <person name="Sayavedra-Soto L.A."/>
            <person name="Hauser L."/>
            <person name="Land M.L."/>
            <person name="Larimer F.W."/>
            <person name="Malfatti S.A."/>
            <person name="Klotz M.G."/>
            <person name="Bottomley P.J."/>
            <person name="Arp D.J."/>
            <person name="Hickey W.J."/>
        </authorList>
    </citation>
    <scope>NUCLEOTIDE SEQUENCE [LARGE SCALE GENOMIC DNA]</scope>
    <source>
        <strain>ATCC 25391 / DSM 10237 / CIP 104748 / NCIMB 11846 / Nb-255</strain>
    </source>
</reference>